<organism>
    <name type="scientific">Escherichia coli (strain 55989 / EAEC)</name>
    <dbReference type="NCBI Taxonomy" id="585055"/>
    <lineage>
        <taxon>Bacteria</taxon>
        <taxon>Pseudomonadati</taxon>
        <taxon>Pseudomonadota</taxon>
        <taxon>Gammaproteobacteria</taxon>
        <taxon>Enterobacterales</taxon>
        <taxon>Enterobacteriaceae</taxon>
        <taxon>Escherichia</taxon>
    </lineage>
</organism>
<sequence>MNPIVINRLQRKLGYTFNHQELLQQALTHRSASSKHNERLEFLGDSILSYVIANALYHRFPRVDEGDMSRMRATLVRGNTLAELAREFELGECLRLGPGELKSGGFRRESILADTVEALIGGVFLDSDIQTVEKLILNWYQTRLDEISPGDKQKDPKTRLQEYLQGRHLPLPTYLVVQVRGEAHDQEFTIHCQVSGLSEPVVGTGSSRRKAEQAAAEQALKKLELE</sequence>
<gene>
    <name evidence="1" type="primary">rnc</name>
    <name type="ordered locus">EC55989_2855</name>
</gene>
<comment type="function">
    <text evidence="1">Digests double-stranded RNA. Involved in the processing of primary rRNA transcript to yield the immediate precursors to the large and small rRNAs (23S and 16S). Processes some mRNAs, and tRNAs when they are encoded in the rRNA operon. Processes pre-crRNA and tracrRNA of type II CRISPR loci if present in the organism.</text>
</comment>
<comment type="catalytic activity">
    <reaction evidence="1">
        <text>Endonucleolytic cleavage to 5'-phosphomonoester.</text>
        <dbReference type="EC" id="3.1.26.3"/>
    </reaction>
</comment>
<comment type="cofactor">
    <cofactor evidence="1">
        <name>Mg(2+)</name>
        <dbReference type="ChEBI" id="CHEBI:18420"/>
    </cofactor>
</comment>
<comment type="subunit">
    <text evidence="1">Homodimer.</text>
</comment>
<comment type="subcellular location">
    <subcellularLocation>
        <location evidence="1">Cytoplasm</location>
    </subcellularLocation>
</comment>
<comment type="similarity">
    <text evidence="1">Belongs to the ribonuclease III family.</text>
</comment>
<evidence type="ECO:0000255" key="1">
    <source>
        <dbReference type="HAMAP-Rule" id="MF_00104"/>
    </source>
</evidence>
<keyword id="KW-0963">Cytoplasm</keyword>
<keyword id="KW-0255">Endonuclease</keyword>
<keyword id="KW-0378">Hydrolase</keyword>
<keyword id="KW-0460">Magnesium</keyword>
<keyword id="KW-0479">Metal-binding</keyword>
<keyword id="KW-0507">mRNA processing</keyword>
<keyword id="KW-0540">Nuclease</keyword>
<keyword id="KW-1185">Reference proteome</keyword>
<keyword id="KW-0694">RNA-binding</keyword>
<keyword id="KW-0698">rRNA processing</keyword>
<keyword id="KW-0699">rRNA-binding</keyword>
<keyword id="KW-0819">tRNA processing</keyword>
<accession>B7LDG0</accession>
<proteinExistence type="inferred from homology"/>
<name>RNC_ECO55</name>
<dbReference type="EC" id="3.1.26.3" evidence="1"/>
<dbReference type="EMBL" id="CU928145">
    <property type="protein sequence ID" value="CAU98726.1"/>
    <property type="molecule type" value="Genomic_DNA"/>
</dbReference>
<dbReference type="RefSeq" id="WP_001068343.1">
    <property type="nucleotide sequence ID" value="NZ_CP028304.1"/>
</dbReference>
<dbReference type="SMR" id="B7LDG0"/>
<dbReference type="GeneID" id="93774524"/>
<dbReference type="KEGG" id="eck:EC55989_2855"/>
<dbReference type="HOGENOM" id="CLU_000907_1_1_6"/>
<dbReference type="Proteomes" id="UP000000746">
    <property type="component" value="Chromosome"/>
</dbReference>
<dbReference type="GO" id="GO:0005737">
    <property type="term" value="C:cytoplasm"/>
    <property type="evidence" value="ECO:0007669"/>
    <property type="project" value="UniProtKB-SubCell"/>
</dbReference>
<dbReference type="GO" id="GO:0003725">
    <property type="term" value="F:double-stranded RNA binding"/>
    <property type="evidence" value="ECO:0007669"/>
    <property type="project" value="TreeGrafter"/>
</dbReference>
<dbReference type="GO" id="GO:0046872">
    <property type="term" value="F:metal ion binding"/>
    <property type="evidence" value="ECO:0007669"/>
    <property type="project" value="UniProtKB-KW"/>
</dbReference>
<dbReference type="GO" id="GO:0004525">
    <property type="term" value="F:ribonuclease III activity"/>
    <property type="evidence" value="ECO:0007669"/>
    <property type="project" value="UniProtKB-UniRule"/>
</dbReference>
<dbReference type="GO" id="GO:0019843">
    <property type="term" value="F:rRNA binding"/>
    <property type="evidence" value="ECO:0007669"/>
    <property type="project" value="UniProtKB-KW"/>
</dbReference>
<dbReference type="GO" id="GO:0006397">
    <property type="term" value="P:mRNA processing"/>
    <property type="evidence" value="ECO:0007669"/>
    <property type="project" value="UniProtKB-UniRule"/>
</dbReference>
<dbReference type="GO" id="GO:0010468">
    <property type="term" value="P:regulation of gene expression"/>
    <property type="evidence" value="ECO:0007669"/>
    <property type="project" value="TreeGrafter"/>
</dbReference>
<dbReference type="GO" id="GO:0006364">
    <property type="term" value="P:rRNA processing"/>
    <property type="evidence" value="ECO:0007669"/>
    <property type="project" value="UniProtKB-UniRule"/>
</dbReference>
<dbReference type="GO" id="GO:0008033">
    <property type="term" value="P:tRNA processing"/>
    <property type="evidence" value="ECO:0007669"/>
    <property type="project" value="UniProtKB-KW"/>
</dbReference>
<dbReference type="CDD" id="cd10845">
    <property type="entry name" value="DSRM_RNAse_III_family"/>
    <property type="match status" value="1"/>
</dbReference>
<dbReference type="CDD" id="cd00593">
    <property type="entry name" value="RIBOc"/>
    <property type="match status" value="1"/>
</dbReference>
<dbReference type="FunFam" id="1.10.1520.10:FF:000001">
    <property type="entry name" value="Ribonuclease 3"/>
    <property type="match status" value="1"/>
</dbReference>
<dbReference type="FunFam" id="3.30.160.20:FF:000003">
    <property type="entry name" value="Ribonuclease 3"/>
    <property type="match status" value="1"/>
</dbReference>
<dbReference type="Gene3D" id="3.30.160.20">
    <property type="match status" value="1"/>
</dbReference>
<dbReference type="Gene3D" id="1.10.1520.10">
    <property type="entry name" value="Ribonuclease III domain"/>
    <property type="match status" value="1"/>
</dbReference>
<dbReference type="HAMAP" id="MF_00104">
    <property type="entry name" value="RNase_III"/>
    <property type="match status" value="1"/>
</dbReference>
<dbReference type="InterPro" id="IPR014720">
    <property type="entry name" value="dsRBD_dom"/>
</dbReference>
<dbReference type="InterPro" id="IPR011907">
    <property type="entry name" value="RNase_III"/>
</dbReference>
<dbReference type="InterPro" id="IPR000999">
    <property type="entry name" value="RNase_III_dom"/>
</dbReference>
<dbReference type="InterPro" id="IPR036389">
    <property type="entry name" value="RNase_III_sf"/>
</dbReference>
<dbReference type="NCBIfam" id="TIGR02191">
    <property type="entry name" value="RNaseIII"/>
    <property type="match status" value="1"/>
</dbReference>
<dbReference type="PANTHER" id="PTHR11207:SF0">
    <property type="entry name" value="RIBONUCLEASE 3"/>
    <property type="match status" value="1"/>
</dbReference>
<dbReference type="PANTHER" id="PTHR11207">
    <property type="entry name" value="RIBONUCLEASE III"/>
    <property type="match status" value="1"/>
</dbReference>
<dbReference type="Pfam" id="PF00035">
    <property type="entry name" value="dsrm"/>
    <property type="match status" value="1"/>
</dbReference>
<dbReference type="Pfam" id="PF14622">
    <property type="entry name" value="Ribonucleas_3_3"/>
    <property type="match status" value="1"/>
</dbReference>
<dbReference type="SMART" id="SM00358">
    <property type="entry name" value="DSRM"/>
    <property type="match status" value="1"/>
</dbReference>
<dbReference type="SMART" id="SM00535">
    <property type="entry name" value="RIBOc"/>
    <property type="match status" value="1"/>
</dbReference>
<dbReference type="SUPFAM" id="SSF54768">
    <property type="entry name" value="dsRNA-binding domain-like"/>
    <property type="match status" value="1"/>
</dbReference>
<dbReference type="SUPFAM" id="SSF69065">
    <property type="entry name" value="RNase III domain-like"/>
    <property type="match status" value="1"/>
</dbReference>
<dbReference type="PROSITE" id="PS50137">
    <property type="entry name" value="DS_RBD"/>
    <property type="match status" value="1"/>
</dbReference>
<dbReference type="PROSITE" id="PS00517">
    <property type="entry name" value="RNASE_3_1"/>
    <property type="match status" value="1"/>
</dbReference>
<dbReference type="PROSITE" id="PS50142">
    <property type="entry name" value="RNASE_3_2"/>
    <property type="match status" value="1"/>
</dbReference>
<protein>
    <recommendedName>
        <fullName evidence="1">Ribonuclease 3</fullName>
        <ecNumber evidence="1">3.1.26.3</ecNumber>
    </recommendedName>
    <alternativeName>
        <fullName evidence="1">Ribonuclease III</fullName>
        <shortName evidence="1">RNase III</shortName>
    </alternativeName>
</protein>
<feature type="chain" id="PRO_1000118923" description="Ribonuclease 3">
    <location>
        <begin position="1"/>
        <end position="226"/>
    </location>
</feature>
<feature type="domain" description="RNase III" evidence="1">
    <location>
        <begin position="6"/>
        <end position="128"/>
    </location>
</feature>
<feature type="domain" description="DRBM" evidence="1">
    <location>
        <begin position="155"/>
        <end position="225"/>
    </location>
</feature>
<feature type="active site" evidence="1">
    <location>
        <position position="45"/>
    </location>
</feature>
<feature type="active site" evidence="1">
    <location>
        <position position="117"/>
    </location>
</feature>
<feature type="binding site" evidence="1">
    <location>
        <position position="41"/>
    </location>
    <ligand>
        <name>Mg(2+)</name>
        <dbReference type="ChEBI" id="CHEBI:18420"/>
    </ligand>
</feature>
<feature type="binding site" evidence="1">
    <location>
        <position position="114"/>
    </location>
    <ligand>
        <name>Mg(2+)</name>
        <dbReference type="ChEBI" id="CHEBI:18420"/>
    </ligand>
</feature>
<feature type="binding site" evidence="1">
    <location>
        <position position="117"/>
    </location>
    <ligand>
        <name>Mg(2+)</name>
        <dbReference type="ChEBI" id="CHEBI:18420"/>
    </ligand>
</feature>
<reference key="1">
    <citation type="journal article" date="2009" name="PLoS Genet.">
        <title>Organised genome dynamics in the Escherichia coli species results in highly diverse adaptive paths.</title>
        <authorList>
            <person name="Touchon M."/>
            <person name="Hoede C."/>
            <person name="Tenaillon O."/>
            <person name="Barbe V."/>
            <person name="Baeriswyl S."/>
            <person name="Bidet P."/>
            <person name="Bingen E."/>
            <person name="Bonacorsi S."/>
            <person name="Bouchier C."/>
            <person name="Bouvet O."/>
            <person name="Calteau A."/>
            <person name="Chiapello H."/>
            <person name="Clermont O."/>
            <person name="Cruveiller S."/>
            <person name="Danchin A."/>
            <person name="Diard M."/>
            <person name="Dossat C."/>
            <person name="Karoui M.E."/>
            <person name="Frapy E."/>
            <person name="Garry L."/>
            <person name="Ghigo J.M."/>
            <person name="Gilles A.M."/>
            <person name="Johnson J."/>
            <person name="Le Bouguenec C."/>
            <person name="Lescat M."/>
            <person name="Mangenot S."/>
            <person name="Martinez-Jehanne V."/>
            <person name="Matic I."/>
            <person name="Nassif X."/>
            <person name="Oztas S."/>
            <person name="Petit M.A."/>
            <person name="Pichon C."/>
            <person name="Rouy Z."/>
            <person name="Ruf C.S."/>
            <person name="Schneider D."/>
            <person name="Tourret J."/>
            <person name="Vacherie B."/>
            <person name="Vallenet D."/>
            <person name="Medigue C."/>
            <person name="Rocha E.P.C."/>
            <person name="Denamur E."/>
        </authorList>
    </citation>
    <scope>NUCLEOTIDE SEQUENCE [LARGE SCALE GENOMIC DNA]</scope>
    <source>
        <strain>55989 / EAEC</strain>
    </source>
</reference>